<keyword id="KW-0378">Hydrolase</keyword>
<sequence>MTEFDLSTREGRWKHFGSVDPIEGTKPTTKNEMTDLQSTHKDFLFEIEEVGIKNLVYPVLVDQYQTAGTFSFSTSLTKDEKGINMSRIIESVEKHYDNGIELEFNTLYQVLRTLQTNMKQNAAGVDVSGKWFFDRYSPTTNIKAVGNADVTYGLAIDGDKVTRKELTIEATVTTLCPCSKEISEYSAHNQRGVVTVKTYINKDQNIVDDYKNKILDAMEANASSILYPILKRPDEKRVTERAYENPRFVEDLIRLIAADLVEFDWLDGFDIECRNEESIHQHDAFAKLKYRK</sequence>
<dbReference type="EC" id="3.5.4.16" evidence="1"/>
<dbReference type="EMBL" id="BA000017">
    <property type="protein sequence ID" value="BAB56728.1"/>
    <property type="molecule type" value="Genomic_DNA"/>
</dbReference>
<dbReference type="RefSeq" id="WP_000134236.1">
    <property type="nucleotide sequence ID" value="NC_002758.2"/>
</dbReference>
<dbReference type="SMR" id="Q99W43"/>
<dbReference type="KEGG" id="sav:SAV0566"/>
<dbReference type="HOGENOM" id="CLU_062816_1_1_9"/>
<dbReference type="PhylomeDB" id="Q99W43"/>
<dbReference type="UniPathway" id="UPA00848">
    <property type="reaction ID" value="UER00151"/>
</dbReference>
<dbReference type="Proteomes" id="UP000002481">
    <property type="component" value="Chromosome"/>
</dbReference>
<dbReference type="GO" id="GO:0003934">
    <property type="term" value="F:GTP cyclohydrolase I activity"/>
    <property type="evidence" value="ECO:0007669"/>
    <property type="project" value="UniProtKB-UniRule"/>
</dbReference>
<dbReference type="GO" id="GO:0046654">
    <property type="term" value="P:tetrahydrofolate biosynthetic process"/>
    <property type="evidence" value="ECO:0007669"/>
    <property type="project" value="UniProtKB-UniRule"/>
</dbReference>
<dbReference type="Gene3D" id="3.10.270.10">
    <property type="entry name" value="Urate Oxidase"/>
    <property type="match status" value="1"/>
</dbReference>
<dbReference type="HAMAP" id="MF_01527_B">
    <property type="entry name" value="GTP_cyclohydrol_B"/>
    <property type="match status" value="1"/>
</dbReference>
<dbReference type="InterPro" id="IPR022838">
    <property type="entry name" value="GTP_cyclohydrolase_FolE2"/>
</dbReference>
<dbReference type="InterPro" id="IPR003801">
    <property type="entry name" value="GTP_cyclohydrolase_FolE2/MptA"/>
</dbReference>
<dbReference type="NCBIfam" id="NF010200">
    <property type="entry name" value="PRK13674.1-1"/>
    <property type="match status" value="1"/>
</dbReference>
<dbReference type="PANTHER" id="PTHR36445">
    <property type="entry name" value="GTP CYCLOHYDROLASE MPTA"/>
    <property type="match status" value="1"/>
</dbReference>
<dbReference type="PANTHER" id="PTHR36445:SF1">
    <property type="entry name" value="GTP CYCLOHYDROLASE MPTA"/>
    <property type="match status" value="1"/>
</dbReference>
<dbReference type="Pfam" id="PF02649">
    <property type="entry name" value="GCHY-1"/>
    <property type="match status" value="1"/>
</dbReference>
<evidence type="ECO:0000255" key="1">
    <source>
        <dbReference type="HAMAP-Rule" id="MF_01527"/>
    </source>
</evidence>
<protein>
    <recommendedName>
        <fullName evidence="1">GTP cyclohydrolase FolE2</fullName>
        <ecNumber evidence="1">3.5.4.16</ecNumber>
    </recommendedName>
</protein>
<accession>Q99W43</accession>
<feature type="chain" id="PRO_0000147725" description="GTP cyclohydrolase FolE2">
    <location>
        <begin position="1"/>
        <end position="292"/>
    </location>
</feature>
<feature type="site" description="May be catalytically important" evidence="1">
    <location>
        <position position="176"/>
    </location>
</feature>
<gene>
    <name evidence="1" type="primary">folE2</name>
    <name type="ordered locus">SAV0566</name>
</gene>
<reference key="1">
    <citation type="journal article" date="2001" name="Lancet">
        <title>Whole genome sequencing of meticillin-resistant Staphylococcus aureus.</title>
        <authorList>
            <person name="Kuroda M."/>
            <person name="Ohta T."/>
            <person name="Uchiyama I."/>
            <person name="Baba T."/>
            <person name="Yuzawa H."/>
            <person name="Kobayashi I."/>
            <person name="Cui L."/>
            <person name="Oguchi A."/>
            <person name="Aoki K."/>
            <person name="Nagai Y."/>
            <person name="Lian J.-Q."/>
            <person name="Ito T."/>
            <person name="Kanamori M."/>
            <person name="Matsumaru H."/>
            <person name="Maruyama A."/>
            <person name="Murakami H."/>
            <person name="Hosoyama A."/>
            <person name="Mizutani-Ui Y."/>
            <person name="Takahashi N.K."/>
            <person name="Sawano T."/>
            <person name="Inoue R."/>
            <person name="Kaito C."/>
            <person name="Sekimizu K."/>
            <person name="Hirakawa H."/>
            <person name="Kuhara S."/>
            <person name="Goto S."/>
            <person name="Yabuzaki J."/>
            <person name="Kanehisa M."/>
            <person name="Yamashita A."/>
            <person name="Oshima K."/>
            <person name="Furuya K."/>
            <person name="Yoshino C."/>
            <person name="Shiba T."/>
            <person name="Hattori M."/>
            <person name="Ogasawara N."/>
            <person name="Hayashi H."/>
            <person name="Hiramatsu K."/>
        </authorList>
    </citation>
    <scope>NUCLEOTIDE SEQUENCE [LARGE SCALE GENOMIC DNA]</scope>
    <source>
        <strain>Mu50 / ATCC 700699</strain>
    </source>
</reference>
<proteinExistence type="inferred from homology"/>
<organism>
    <name type="scientific">Staphylococcus aureus (strain Mu50 / ATCC 700699)</name>
    <dbReference type="NCBI Taxonomy" id="158878"/>
    <lineage>
        <taxon>Bacteria</taxon>
        <taxon>Bacillati</taxon>
        <taxon>Bacillota</taxon>
        <taxon>Bacilli</taxon>
        <taxon>Bacillales</taxon>
        <taxon>Staphylococcaceae</taxon>
        <taxon>Staphylococcus</taxon>
    </lineage>
</organism>
<name>GCH4_STAAM</name>
<comment type="function">
    <text evidence="1">Converts GTP to 7,8-dihydroneopterin triphosphate.</text>
</comment>
<comment type="catalytic activity">
    <reaction evidence="1">
        <text>GTP + H2O = 7,8-dihydroneopterin 3'-triphosphate + formate + H(+)</text>
        <dbReference type="Rhea" id="RHEA:17473"/>
        <dbReference type="ChEBI" id="CHEBI:15377"/>
        <dbReference type="ChEBI" id="CHEBI:15378"/>
        <dbReference type="ChEBI" id="CHEBI:15740"/>
        <dbReference type="ChEBI" id="CHEBI:37565"/>
        <dbReference type="ChEBI" id="CHEBI:58462"/>
        <dbReference type="EC" id="3.5.4.16"/>
    </reaction>
</comment>
<comment type="pathway">
    <text evidence="1">Cofactor biosynthesis; 7,8-dihydroneopterin triphosphate biosynthesis; 7,8-dihydroneopterin triphosphate from GTP: step 1/1.</text>
</comment>
<comment type="similarity">
    <text evidence="1">Belongs to the GTP cyclohydrolase IV family.</text>
</comment>